<name>XYLA_BRUO2</name>
<sequence length="435" mass="48962">MSTGFFGDIQKVRYEGPESDNPLAFRHYNADEIVLGKRMEDHLRFAVAYWHSFAWEGGDPFGGRTFDRPWFSNEIDAAKLKADVAFEFFSLLGAPYYCFHDADVRPEGRNFAENTRYLNEIVDIFEKKQAETGMKLLWGTANLFSNRRYMAGAATNPDPDVFAFAAATVKTCIDATKRLGGENYVLWGGREGYETLLNTDLSRELDHMGRFLSLVVEYKHKIGFKGTILIEPKPQAPTKHQYDYDVATVYGFLKRYGLENEVKVNIEQGHAILAGHSFEHELALARTLGIFGSIDMNRNDYQSGWDTDQFPNNVPEMALAYYQVLLAGGFTTGGTNFDAKLRRQSLDPQDLLIGHIGGMDCCARGLKASARMLEDGALSKPLDERYAGWNGEFGKRLLSGLSLDQIAGEVEAKDINPQPKSGRQEYLENIVNRYV</sequence>
<evidence type="ECO:0000255" key="1">
    <source>
        <dbReference type="HAMAP-Rule" id="MF_00455"/>
    </source>
</evidence>
<reference key="1">
    <citation type="journal article" date="2009" name="PLoS ONE">
        <title>Genome degradation in Brucella ovis corresponds with narrowing of its host range and tissue tropism.</title>
        <authorList>
            <person name="Tsolis R.M."/>
            <person name="Seshadri R."/>
            <person name="Santos R.L."/>
            <person name="Sangari F.J."/>
            <person name="Lobo J.M."/>
            <person name="de Jong M.F."/>
            <person name="Ren Q."/>
            <person name="Myers G."/>
            <person name="Brinkac L.M."/>
            <person name="Nelson W.C."/>
            <person name="Deboy R.T."/>
            <person name="Angiuoli S."/>
            <person name="Khouri H."/>
            <person name="Dimitrov G."/>
            <person name="Robinson J.R."/>
            <person name="Mulligan S."/>
            <person name="Walker R.L."/>
            <person name="Elzer P.E."/>
            <person name="Hassan K.A."/>
            <person name="Paulsen I.T."/>
        </authorList>
    </citation>
    <scope>NUCLEOTIDE SEQUENCE [LARGE SCALE GENOMIC DNA]</scope>
    <source>
        <strain>ATCC 25840 / 63/290 / NCTC 10512</strain>
    </source>
</reference>
<comment type="catalytic activity">
    <reaction evidence="1">
        <text>alpha-D-xylose = alpha-D-xylulofuranose</text>
        <dbReference type="Rhea" id="RHEA:22816"/>
        <dbReference type="ChEBI" id="CHEBI:28518"/>
        <dbReference type="ChEBI" id="CHEBI:188998"/>
        <dbReference type="EC" id="5.3.1.5"/>
    </reaction>
</comment>
<comment type="cofactor">
    <cofactor evidence="1">
        <name>Mg(2+)</name>
        <dbReference type="ChEBI" id="CHEBI:18420"/>
    </cofactor>
    <text evidence="1">Binds 2 magnesium ions per subunit.</text>
</comment>
<comment type="subunit">
    <text evidence="1">Homotetramer.</text>
</comment>
<comment type="subcellular location">
    <subcellularLocation>
        <location evidence="1">Cytoplasm</location>
    </subcellularLocation>
</comment>
<comment type="similarity">
    <text evidence="1">Belongs to the xylose isomerase family.</text>
</comment>
<feature type="chain" id="PRO_1000026432" description="Xylose isomerase">
    <location>
        <begin position="1"/>
        <end position="435"/>
    </location>
</feature>
<feature type="active site" evidence="1">
    <location>
        <position position="100"/>
    </location>
</feature>
<feature type="active site" evidence="1">
    <location>
        <position position="103"/>
    </location>
</feature>
<feature type="binding site" evidence="1">
    <location>
        <position position="231"/>
    </location>
    <ligand>
        <name>Mg(2+)</name>
        <dbReference type="ChEBI" id="CHEBI:18420"/>
        <label>1</label>
    </ligand>
</feature>
<feature type="binding site" evidence="1">
    <location>
        <position position="267"/>
    </location>
    <ligand>
        <name>Mg(2+)</name>
        <dbReference type="ChEBI" id="CHEBI:18420"/>
        <label>1</label>
    </ligand>
</feature>
<feature type="binding site" evidence="1">
    <location>
        <position position="267"/>
    </location>
    <ligand>
        <name>Mg(2+)</name>
        <dbReference type="ChEBI" id="CHEBI:18420"/>
        <label>2</label>
    </ligand>
</feature>
<feature type="binding site" evidence="1">
    <location>
        <position position="270"/>
    </location>
    <ligand>
        <name>Mg(2+)</name>
        <dbReference type="ChEBI" id="CHEBI:18420"/>
        <label>2</label>
    </ligand>
</feature>
<feature type="binding site" evidence="1">
    <location>
        <position position="295"/>
    </location>
    <ligand>
        <name>Mg(2+)</name>
        <dbReference type="ChEBI" id="CHEBI:18420"/>
        <label>1</label>
    </ligand>
</feature>
<feature type="binding site" evidence="1">
    <location>
        <position position="306"/>
    </location>
    <ligand>
        <name>Mg(2+)</name>
        <dbReference type="ChEBI" id="CHEBI:18420"/>
        <label>2</label>
    </ligand>
</feature>
<feature type="binding site" evidence="1">
    <location>
        <position position="308"/>
    </location>
    <ligand>
        <name>Mg(2+)</name>
        <dbReference type="ChEBI" id="CHEBI:18420"/>
        <label>2</label>
    </ligand>
</feature>
<feature type="binding site" evidence="1">
    <location>
        <position position="338"/>
    </location>
    <ligand>
        <name>Mg(2+)</name>
        <dbReference type="ChEBI" id="CHEBI:18420"/>
        <label>1</label>
    </ligand>
</feature>
<proteinExistence type="inferred from homology"/>
<dbReference type="EC" id="5.3.1.5" evidence="1"/>
<dbReference type="EMBL" id="CP000708">
    <property type="protein sequence ID" value="ABQ61472.1"/>
    <property type="molecule type" value="Genomic_DNA"/>
</dbReference>
<dbReference type="RefSeq" id="WP_006011751.1">
    <property type="nucleotide sequence ID" value="NC_009505.1"/>
</dbReference>
<dbReference type="SMR" id="A5VPA1"/>
<dbReference type="GeneID" id="45124011"/>
<dbReference type="KEGG" id="bov:BOV_0549"/>
<dbReference type="HOGENOM" id="CLU_037261_1_0_5"/>
<dbReference type="Proteomes" id="UP000006383">
    <property type="component" value="Chromosome I"/>
</dbReference>
<dbReference type="GO" id="GO:0005737">
    <property type="term" value="C:cytoplasm"/>
    <property type="evidence" value="ECO:0007669"/>
    <property type="project" value="UniProtKB-SubCell"/>
</dbReference>
<dbReference type="GO" id="GO:0000287">
    <property type="term" value="F:magnesium ion binding"/>
    <property type="evidence" value="ECO:0007669"/>
    <property type="project" value="UniProtKB-UniRule"/>
</dbReference>
<dbReference type="GO" id="GO:0009045">
    <property type="term" value="F:xylose isomerase activity"/>
    <property type="evidence" value="ECO:0007669"/>
    <property type="project" value="UniProtKB-UniRule"/>
</dbReference>
<dbReference type="GO" id="GO:0042732">
    <property type="term" value="P:D-xylose metabolic process"/>
    <property type="evidence" value="ECO:0007669"/>
    <property type="project" value="UniProtKB-UniRule"/>
</dbReference>
<dbReference type="FunFam" id="3.20.20.150:FF:000002">
    <property type="entry name" value="Xylose isomerase"/>
    <property type="match status" value="1"/>
</dbReference>
<dbReference type="Gene3D" id="3.20.20.150">
    <property type="entry name" value="Divalent-metal-dependent TIM barrel enzymes"/>
    <property type="match status" value="1"/>
</dbReference>
<dbReference type="HAMAP" id="MF_00455">
    <property type="entry name" value="Xylose_isom_A"/>
    <property type="match status" value="1"/>
</dbReference>
<dbReference type="InterPro" id="IPR036237">
    <property type="entry name" value="Xyl_isomerase-like_sf"/>
</dbReference>
<dbReference type="InterPro" id="IPR013452">
    <property type="entry name" value="Xylose_isom_bac"/>
</dbReference>
<dbReference type="InterPro" id="IPR001998">
    <property type="entry name" value="Xylose_isomerase"/>
</dbReference>
<dbReference type="NCBIfam" id="NF003998">
    <property type="entry name" value="PRK05474.1"/>
    <property type="match status" value="1"/>
</dbReference>
<dbReference type="NCBIfam" id="TIGR02630">
    <property type="entry name" value="xylose_isom_A"/>
    <property type="match status" value="1"/>
</dbReference>
<dbReference type="PANTHER" id="PTHR48408">
    <property type="match status" value="1"/>
</dbReference>
<dbReference type="PANTHER" id="PTHR48408:SF1">
    <property type="entry name" value="XYLOSE ISOMERASE"/>
    <property type="match status" value="1"/>
</dbReference>
<dbReference type="PRINTS" id="PR00688">
    <property type="entry name" value="XYLOSISMRASE"/>
</dbReference>
<dbReference type="SUPFAM" id="SSF51658">
    <property type="entry name" value="Xylose isomerase-like"/>
    <property type="match status" value="1"/>
</dbReference>
<dbReference type="PROSITE" id="PS51415">
    <property type="entry name" value="XYLOSE_ISOMERASE"/>
    <property type="match status" value="1"/>
</dbReference>
<keyword id="KW-0119">Carbohydrate metabolism</keyword>
<keyword id="KW-0963">Cytoplasm</keyword>
<keyword id="KW-0413">Isomerase</keyword>
<keyword id="KW-0460">Magnesium</keyword>
<keyword id="KW-0479">Metal-binding</keyword>
<keyword id="KW-0859">Xylose metabolism</keyword>
<accession>A5VPA1</accession>
<organism>
    <name type="scientific">Brucella ovis (strain ATCC 25840 / 63/290 / NCTC 10512)</name>
    <dbReference type="NCBI Taxonomy" id="444178"/>
    <lineage>
        <taxon>Bacteria</taxon>
        <taxon>Pseudomonadati</taxon>
        <taxon>Pseudomonadota</taxon>
        <taxon>Alphaproteobacteria</taxon>
        <taxon>Hyphomicrobiales</taxon>
        <taxon>Brucellaceae</taxon>
        <taxon>Brucella/Ochrobactrum group</taxon>
        <taxon>Brucella</taxon>
    </lineage>
</organism>
<gene>
    <name evidence="1" type="primary">xylA</name>
    <name type="ordered locus">BOV_0549</name>
</gene>
<protein>
    <recommendedName>
        <fullName evidence="1">Xylose isomerase</fullName>
        <ecNumber evidence="1">5.3.1.5</ecNumber>
    </recommendedName>
</protein>